<dbReference type="EC" id="2.5.1.19" evidence="1"/>
<dbReference type="EMBL" id="CP000557">
    <property type="protein sequence ID" value="ABO67482.1"/>
    <property type="molecule type" value="Genomic_DNA"/>
</dbReference>
<dbReference type="SMR" id="A4IQ78"/>
<dbReference type="KEGG" id="gtn:GTNG_2130"/>
<dbReference type="eggNOG" id="COG0128">
    <property type="taxonomic scope" value="Bacteria"/>
</dbReference>
<dbReference type="HOGENOM" id="CLU_024321_0_1_9"/>
<dbReference type="UniPathway" id="UPA00053">
    <property type="reaction ID" value="UER00089"/>
</dbReference>
<dbReference type="Proteomes" id="UP000001578">
    <property type="component" value="Chromosome"/>
</dbReference>
<dbReference type="GO" id="GO:0005737">
    <property type="term" value="C:cytoplasm"/>
    <property type="evidence" value="ECO:0007669"/>
    <property type="project" value="UniProtKB-SubCell"/>
</dbReference>
<dbReference type="GO" id="GO:0003866">
    <property type="term" value="F:3-phosphoshikimate 1-carboxyvinyltransferase activity"/>
    <property type="evidence" value="ECO:0007669"/>
    <property type="project" value="UniProtKB-UniRule"/>
</dbReference>
<dbReference type="GO" id="GO:0008652">
    <property type="term" value="P:amino acid biosynthetic process"/>
    <property type="evidence" value="ECO:0007669"/>
    <property type="project" value="UniProtKB-KW"/>
</dbReference>
<dbReference type="GO" id="GO:0009073">
    <property type="term" value="P:aromatic amino acid family biosynthetic process"/>
    <property type="evidence" value="ECO:0007669"/>
    <property type="project" value="UniProtKB-KW"/>
</dbReference>
<dbReference type="GO" id="GO:0009423">
    <property type="term" value="P:chorismate biosynthetic process"/>
    <property type="evidence" value="ECO:0007669"/>
    <property type="project" value="UniProtKB-UniRule"/>
</dbReference>
<dbReference type="CDD" id="cd01556">
    <property type="entry name" value="EPSP_synthase"/>
    <property type="match status" value="1"/>
</dbReference>
<dbReference type="FunFam" id="3.65.10.10:FF:000005">
    <property type="entry name" value="3-phosphoshikimate 1-carboxyvinyltransferase"/>
    <property type="match status" value="1"/>
</dbReference>
<dbReference type="FunFam" id="3.65.10.10:FF:000006">
    <property type="entry name" value="3-phosphoshikimate 1-carboxyvinyltransferase"/>
    <property type="match status" value="1"/>
</dbReference>
<dbReference type="Gene3D" id="3.65.10.10">
    <property type="entry name" value="Enolpyruvate transferase domain"/>
    <property type="match status" value="2"/>
</dbReference>
<dbReference type="HAMAP" id="MF_00210">
    <property type="entry name" value="EPSP_synth"/>
    <property type="match status" value="1"/>
</dbReference>
<dbReference type="InterPro" id="IPR001986">
    <property type="entry name" value="Enolpyruvate_Tfrase_dom"/>
</dbReference>
<dbReference type="InterPro" id="IPR036968">
    <property type="entry name" value="Enolpyruvate_Tfrase_sf"/>
</dbReference>
<dbReference type="InterPro" id="IPR006264">
    <property type="entry name" value="EPSP_synthase"/>
</dbReference>
<dbReference type="InterPro" id="IPR023193">
    <property type="entry name" value="EPSP_synthase_CS"/>
</dbReference>
<dbReference type="InterPro" id="IPR013792">
    <property type="entry name" value="RNA3'P_cycl/enolpyr_Trfase_a/b"/>
</dbReference>
<dbReference type="NCBIfam" id="TIGR01356">
    <property type="entry name" value="aroA"/>
    <property type="match status" value="1"/>
</dbReference>
<dbReference type="PANTHER" id="PTHR21090">
    <property type="entry name" value="AROM/DEHYDROQUINATE SYNTHASE"/>
    <property type="match status" value="1"/>
</dbReference>
<dbReference type="PANTHER" id="PTHR21090:SF5">
    <property type="entry name" value="PENTAFUNCTIONAL AROM POLYPEPTIDE"/>
    <property type="match status" value="1"/>
</dbReference>
<dbReference type="Pfam" id="PF00275">
    <property type="entry name" value="EPSP_synthase"/>
    <property type="match status" value="1"/>
</dbReference>
<dbReference type="PIRSF" id="PIRSF000505">
    <property type="entry name" value="EPSPS"/>
    <property type="match status" value="1"/>
</dbReference>
<dbReference type="SUPFAM" id="SSF55205">
    <property type="entry name" value="EPT/RTPC-like"/>
    <property type="match status" value="1"/>
</dbReference>
<dbReference type="PROSITE" id="PS00104">
    <property type="entry name" value="EPSP_SYNTHASE_1"/>
    <property type="match status" value="1"/>
</dbReference>
<dbReference type="PROSITE" id="PS00885">
    <property type="entry name" value="EPSP_SYNTHASE_2"/>
    <property type="match status" value="1"/>
</dbReference>
<evidence type="ECO:0000255" key="1">
    <source>
        <dbReference type="HAMAP-Rule" id="MF_00210"/>
    </source>
</evidence>
<proteinExistence type="inferred from homology"/>
<organism>
    <name type="scientific">Geobacillus thermodenitrificans (strain NG80-2)</name>
    <dbReference type="NCBI Taxonomy" id="420246"/>
    <lineage>
        <taxon>Bacteria</taxon>
        <taxon>Bacillati</taxon>
        <taxon>Bacillota</taxon>
        <taxon>Bacilli</taxon>
        <taxon>Bacillales</taxon>
        <taxon>Anoxybacillaceae</taxon>
        <taxon>Geobacillus</taxon>
    </lineage>
</organism>
<gene>
    <name evidence="1" type="primary">aroA</name>
    <name type="ordered locus">GTNG_2130</name>
</gene>
<sequence length="432" mass="45728">MEGCCMQLPTNVSSLRGTIEVPGDKSISHRAVMLGALASGRTVIDHFLPGADCLSTIDCFRKLGVDIHQDGTNVIVEGAGSGGLREPAAVLDVGNSGTTARLLLGILAGQPFHACLVGDESIAQRPMARVTKPLREMGAHIDGRDDGNYTPLAIRGGALRPLRYTSPVASAQVKSAILLAGLFTDGVTSVTEPHRSRDHTERMIRLFGGEVNVDGLTVSIAGPQSLRGTHIYVPGDISSAAFFLVAGAIVPNSEITLKNVGLNPTRTGIIDVLERMGADITIDHIRNEETEPIGDITIRTSTLHAIEIGGDIIPRLIDEIPIIALLATQAEGTTIIKDASELKVKETNRIDTVVAELKKFGADIEATDDGMIIRGKTALYADGIVVDSHGDHRIGMMLAIAACCAKGTARLERPEAVAVSYPAFFADLRSLL</sequence>
<reference key="1">
    <citation type="journal article" date="2007" name="Proc. Natl. Acad. Sci. U.S.A.">
        <title>Genome and proteome of long-chain alkane degrading Geobacillus thermodenitrificans NG80-2 isolated from a deep-subsurface oil reservoir.</title>
        <authorList>
            <person name="Feng L."/>
            <person name="Wang W."/>
            <person name="Cheng J."/>
            <person name="Ren Y."/>
            <person name="Zhao G."/>
            <person name="Gao C."/>
            <person name="Tang Y."/>
            <person name="Liu X."/>
            <person name="Han W."/>
            <person name="Peng X."/>
            <person name="Liu R."/>
            <person name="Wang L."/>
        </authorList>
    </citation>
    <scope>NUCLEOTIDE SEQUENCE [LARGE SCALE GENOMIC DNA]</scope>
    <source>
        <strain>NG80-2</strain>
    </source>
</reference>
<name>AROA_GEOTN</name>
<feature type="chain" id="PRO_1000012435" description="3-phosphoshikimate 1-carboxyvinyltransferase">
    <location>
        <begin position="1"/>
        <end position="432"/>
    </location>
</feature>
<feature type="active site" description="Proton acceptor" evidence="1">
    <location>
        <position position="318"/>
    </location>
</feature>
<feature type="binding site" evidence="1">
    <location>
        <position position="25"/>
    </location>
    <ligand>
        <name>3-phosphoshikimate</name>
        <dbReference type="ChEBI" id="CHEBI:145989"/>
    </ligand>
</feature>
<feature type="binding site" evidence="1">
    <location>
        <position position="25"/>
    </location>
    <ligand>
        <name>phosphoenolpyruvate</name>
        <dbReference type="ChEBI" id="CHEBI:58702"/>
    </ligand>
</feature>
<feature type="binding site" evidence="1">
    <location>
        <position position="26"/>
    </location>
    <ligand>
        <name>3-phosphoshikimate</name>
        <dbReference type="ChEBI" id="CHEBI:145989"/>
    </ligand>
</feature>
<feature type="binding site" evidence="1">
    <location>
        <position position="30"/>
    </location>
    <ligand>
        <name>3-phosphoshikimate</name>
        <dbReference type="ChEBI" id="CHEBI:145989"/>
    </ligand>
</feature>
<feature type="binding site" evidence="1">
    <location>
        <position position="97"/>
    </location>
    <ligand>
        <name>phosphoenolpyruvate</name>
        <dbReference type="ChEBI" id="CHEBI:58702"/>
    </ligand>
</feature>
<feature type="binding site" evidence="1">
    <location>
        <position position="125"/>
    </location>
    <ligand>
        <name>phosphoenolpyruvate</name>
        <dbReference type="ChEBI" id="CHEBI:58702"/>
    </ligand>
</feature>
<feature type="binding site" evidence="1">
    <location>
        <position position="170"/>
    </location>
    <ligand>
        <name>3-phosphoshikimate</name>
        <dbReference type="ChEBI" id="CHEBI:145989"/>
    </ligand>
</feature>
<feature type="binding site" evidence="1">
    <location>
        <position position="172"/>
    </location>
    <ligand>
        <name>3-phosphoshikimate</name>
        <dbReference type="ChEBI" id="CHEBI:145989"/>
    </ligand>
</feature>
<feature type="binding site" evidence="1">
    <location>
        <position position="172"/>
    </location>
    <ligand>
        <name>phosphoenolpyruvate</name>
        <dbReference type="ChEBI" id="CHEBI:58702"/>
    </ligand>
</feature>
<feature type="binding site" evidence="1">
    <location>
        <position position="318"/>
    </location>
    <ligand>
        <name>3-phosphoshikimate</name>
        <dbReference type="ChEBI" id="CHEBI:145989"/>
    </ligand>
</feature>
<feature type="binding site" evidence="1">
    <location>
        <position position="345"/>
    </location>
    <ligand>
        <name>3-phosphoshikimate</name>
        <dbReference type="ChEBI" id="CHEBI:145989"/>
    </ligand>
</feature>
<feature type="binding site" evidence="1">
    <location>
        <position position="349"/>
    </location>
    <ligand>
        <name>phosphoenolpyruvate</name>
        <dbReference type="ChEBI" id="CHEBI:58702"/>
    </ligand>
</feature>
<feature type="binding site" evidence="1">
    <location>
        <position position="393"/>
    </location>
    <ligand>
        <name>phosphoenolpyruvate</name>
        <dbReference type="ChEBI" id="CHEBI:58702"/>
    </ligand>
</feature>
<keyword id="KW-0028">Amino-acid biosynthesis</keyword>
<keyword id="KW-0057">Aromatic amino acid biosynthesis</keyword>
<keyword id="KW-0963">Cytoplasm</keyword>
<keyword id="KW-0808">Transferase</keyword>
<accession>A4IQ78</accession>
<comment type="function">
    <text evidence="1">Catalyzes the transfer of the enolpyruvyl moiety of phosphoenolpyruvate (PEP) to the 5-hydroxyl of shikimate-3-phosphate (S3P) to produce enolpyruvyl shikimate-3-phosphate and inorganic phosphate.</text>
</comment>
<comment type="catalytic activity">
    <reaction evidence="1">
        <text>3-phosphoshikimate + phosphoenolpyruvate = 5-O-(1-carboxyvinyl)-3-phosphoshikimate + phosphate</text>
        <dbReference type="Rhea" id="RHEA:21256"/>
        <dbReference type="ChEBI" id="CHEBI:43474"/>
        <dbReference type="ChEBI" id="CHEBI:57701"/>
        <dbReference type="ChEBI" id="CHEBI:58702"/>
        <dbReference type="ChEBI" id="CHEBI:145989"/>
        <dbReference type="EC" id="2.5.1.19"/>
    </reaction>
    <physiologicalReaction direction="left-to-right" evidence="1">
        <dbReference type="Rhea" id="RHEA:21257"/>
    </physiologicalReaction>
</comment>
<comment type="pathway">
    <text evidence="1">Metabolic intermediate biosynthesis; chorismate biosynthesis; chorismate from D-erythrose 4-phosphate and phosphoenolpyruvate: step 6/7.</text>
</comment>
<comment type="subunit">
    <text evidence="1">Monomer.</text>
</comment>
<comment type="subcellular location">
    <subcellularLocation>
        <location evidence="1">Cytoplasm</location>
    </subcellularLocation>
</comment>
<comment type="similarity">
    <text evidence="1">Belongs to the EPSP synthase family.</text>
</comment>
<protein>
    <recommendedName>
        <fullName evidence="1">3-phosphoshikimate 1-carboxyvinyltransferase</fullName>
        <ecNumber evidence="1">2.5.1.19</ecNumber>
    </recommendedName>
    <alternativeName>
        <fullName evidence="1">5-enolpyruvylshikimate-3-phosphate synthase</fullName>
        <shortName evidence="1">EPSP synthase</shortName>
        <shortName evidence="1">EPSPS</shortName>
    </alternativeName>
</protein>